<sequence length="144" mass="16313">MKTFSAKPHEVRHEWFVVDATDKVLGRLAAAIAHRLRGKHKPIYTPHVDTGDYIVVINADKLRVTGNKAEDKKYYRHSGYPGGIYETTFKKMHERFPTRPLEKAVKGMLPKGPLGYAMIKKLKIYAGDTHPHAAQQPQPLEINA</sequence>
<organism>
    <name type="scientific">Nitrosomonas europaea (strain ATCC 19718 / CIP 103999 / KCTC 2705 / NBRC 14298)</name>
    <dbReference type="NCBI Taxonomy" id="228410"/>
    <lineage>
        <taxon>Bacteria</taxon>
        <taxon>Pseudomonadati</taxon>
        <taxon>Pseudomonadota</taxon>
        <taxon>Betaproteobacteria</taxon>
        <taxon>Nitrosomonadales</taxon>
        <taxon>Nitrosomonadaceae</taxon>
        <taxon>Nitrosomonas</taxon>
    </lineage>
</organism>
<dbReference type="EMBL" id="AL954747">
    <property type="protein sequence ID" value="CAD85395.1"/>
    <property type="molecule type" value="Genomic_DNA"/>
</dbReference>
<dbReference type="RefSeq" id="WP_011112052.1">
    <property type="nucleotide sequence ID" value="NC_004757.1"/>
</dbReference>
<dbReference type="SMR" id="Q82UK0"/>
<dbReference type="STRING" id="228410.NE1484"/>
<dbReference type="GeneID" id="87104658"/>
<dbReference type="KEGG" id="neu:NE1484"/>
<dbReference type="eggNOG" id="COG0102">
    <property type="taxonomic scope" value="Bacteria"/>
</dbReference>
<dbReference type="HOGENOM" id="CLU_082184_2_2_4"/>
<dbReference type="OrthoDB" id="9801330at2"/>
<dbReference type="PhylomeDB" id="Q82UK0"/>
<dbReference type="Proteomes" id="UP000001416">
    <property type="component" value="Chromosome"/>
</dbReference>
<dbReference type="GO" id="GO:0022625">
    <property type="term" value="C:cytosolic large ribosomal subunit"/>
    <property type="evidence" value="ECO:0007669"/>
    <property type="project" value="TreeGrafter"/>
</dbReference>
<dbReference type="GO" id="GO:0003729">
    <property type="term" value="F:mRNA binding"/>
    <property type="evidence" value="ECO:0007669"/>
    <property type="project" value="TreeGrafter"/>
</dbReference>
<dbReference type="GO" id="GO:0003735">
    <property type="term" value="F:structural constituent of ribosome"/>
    <property type="evidence" value="ECO:0007669"/>
    <property type="project" value="InterPro"/>
</dbReference>
<dbReference type="GO" id="GO:0017148">
    <property type="term" value="P:negative regulation of translation"/>
    <property type="evidence" value="ECO:0007669"/>
    <property type="project" value="TreeGrafter"/>
</dbReference>
<dbReference type="GO" id="GO:0006412">
    <property type="term" value="P:translation"/>
    <property type="evidence" value="ECO:0007669"/>
    <property type="project" value="UniProtKB-UniRule"/>
</dbReference>
<dbReference type="CDD" id="cd00392">
    <property type="entry name" value="Ribosomal_L13"/>
    <property type="match status" value="1"/>
</dbReference>
<dbReference type="FunFam" id="3.90.1180.10:FF:000001">
    <property type="entry name" value="50S ribosomal protein L13"/>
    <property type="match status" value="1"/>
</dbReference>
<dbReference type="Gene3D" id="3.90.1180.10">
    <property type="entry name" value="Ribosomal protein L13"/>
    <property type="match status" value="1"/>
</dbReference>
<dbReference type="HAMAP" id="MF_01366">
    <property type="entry name" value="Ribosomal_uL13"/>
    <property type="match status" value="1"/>
</dbReference>
<dbReference type="InterPro" id="IPR005822">
    <property type="entry name" value="Ribosomal_uL13"/>
</dbReference>
<dbReference type="InterPro" id="IPR005823">
    <property type="entry name" value="Ribosomal_uL13_bac-type"/>
</dbReference>
<dbReference type="InterPro" id="IPR036899">
    <property type="entry name" value="Ribosomal_uL13_sf"/>
</dbReference>
<dbReference type="NCBIfam" id="TIGR01066">
    <property type="entry name" value="rplM_bact"/>
    <property type="match status" value="1"/>
</dbReference>
<dbReference type="PANTHER" id="PTHR11545:SF2">
    <property type="entry name" value="LARGE RIBOSOMAL SUBUNIT PROTEIN UL13M"/>
    <property type="match status" value="1"/>
</dbReference>
<dbReference type="PANTHER" id="PTHR11545">
    <property type="entry name" value="RIBOSOMAL PROTEIN L13"/>
    <property type="match status" value="1"/>
</dbReference>
<dbReference type="Pfam" id="PF00572">
    <property type="entry name" value="Ribosomal_L13"/>
    <property type="match status" value="1"/>
</dbReference>
<dbReference type="PIRSF" id="PIRSF002181">
    <property type="entry name" value="Ribosomal_L13"/>
    <property type="match status" value="1"/>
</dbReference>
<dbReference type="SUPFAM" id="SSF52161">
    <property type="entry name" value="Ribosomal protein L13"/>
    <property type="match status" value="1"/>
</dbReference>
<gene>
    <name evidence="1" type="primary">rplM</name>
    <name type="ordered locus">NE1484</name>
</gene>
<protein>
    <recommendedName>
        <fullName evidence="1">Large ribosomal subunit protein uL13</fullName>
    </recommendedName>
    <alternativeName>
        <fullName evidence="2">50S ribosomal protein L13</fullName>
    </alternativeName>
</protein>
<name>RL13_NITEU</name>
<comment type="function">
    <text evidence="1">This protein is one of the early assembly proteins of the 50S ribosomal subunit, although it is not seen to bind rRNA by itself. It is important during the early stages of 50S assembly.</text>
</comment>
<comment type="subunit">
    <text evidence="1">Part of the 50S ribosomal subunit.</text>
</comment>
<comment type="similarity">
    <text evidence="1">Belongs to the universal ribosomal protein uL13 family.</text>
</comment>
<evidence type="ECO:0000255" key="1">
    <source>
        <dbReference type="HAMAP-Rule" id="MF_01366"/>
    </source>
</evidence>
<evidence type="ECO:0000305" key="2"/>
<keyword id="KW-1185">Reference proteome</keyword>
<keyword id="KW-0687">Ribonucleoprotein</keyword>
<keyword id="KW-0689">Ribosomal protein</keyword>
<reference key="1">
    <citation type="journal article" date="2003" name="J. Bacteriol.">
        <title>Complete genome sequence of the ammonia-oxidizing bacterium and obligate chemolithoautotroph Nitrosomonas europaea.</title>
        <authorList>
            <person name="Chain P."/>
            <person name="Lamerdin J.E."/>
            <person name="Larimer F.W."/>
            <person name="Regala W."/>
            <person name="Lao V."/>
            <person name="Land M.L."/>
            <person name="Hauser L."/>
            <person name="Hooper A.B."/>
            <person name="Klotz M.G."/>
            <person name="Norton J."/>
            <person name="Sayavedra-Soto L.A."/>
            <person name="Arciero D.M."/>
            <person name="Hommes N.G."/>
            <person name="Whittaker M.M."/>
            <person name="Arp D.J."/>
        </authorList>
    </citation>
    <scope>NUCLEOTIDE SEQUENCE [LARGE SCALE GENOMIC DNA]</scope>
    <source>
        <strain>ATCC 19718 / CIP 103999 / KCTC 2705 / NBRC 14298</strain>
    </source>
</reference>
<accession>Q82UK0</accession>
<proteinExistence type="inferred from homology"/>
<feature type="chain" id="PRO_0000261757" description="Large ribosomal subunit protein uL13">
    <location>
        <begin position="1"/>
        <end position="144"/>
    </location>
</feature>